<feature type="chain" id="PRO_0000057633" description="UPF0282 protein MM_2966">
    <location>
        <begin position="1"/>
        <end position="303"/>
    </location>
</feature>
<dbReference type="EMBL" id="AE008384">
    <property type="protein sequence ID" value="AAM32662.1"/>
    <property type="molecule type" value="Genomic_DNA"/>
</dbReference>
<dbReference type="RefSeq" id="WP_011034867.1">
    <property type="nucleotide sequence ID" value="NC_003901.1"/>
</dbReference>
<dbReference type="KEGG" id="mma:MM_2966"/>
<dbReference type="PATRIC" id="fig|192952.21.peg.3443"/>
<dbReference type="eggNOG" id="arCOG00969">
    <property type="taxonomic scope" value="Archaea"/>
</dbReference>
<dbReference type="HOGENOM" id="CLU_079268_0_0_2"/>
<dbReference type="Proteomes" id="UP000000595">
    <property type="component" value="Chromosome"/>
</dbReference>
<dbReference type="Gene3D" id="3.60.15.10">
    <property type="entry name" value="Ribonuclease Z/Hydroxyacylglutathione hydrolase-like"/>
    <property type="match status" value="1"/>
</dbReference>
<dbReference type="HAMAP" id="MF_01406">
    <property type="entry name" value="UPF0282"/>
    <property type="match status" value="1"/>
</dbReference>
<dbReference type="InterPro" id="IPR036866">
    <property type="entry name" value="RibonucZ/Hydroxyglut_hydro"/>
</dbReference>
<dbReference type="InterPro" id="IPR050114">
    <property type="entry name" value="UPF0173_UPF0282_UlaG_hydrolase"/>
</dbReference>
<dbReference type="InterPro" id="IPR014426">
    <property type="entry name" value="UPF0282_hydrls"/>
</dbReference>
<dbReference type="NCBIfam" id="NF003288">
    <property type="entry name" value="PRK04286.1-2"/>
    <property type="match status" value="1"/>
</dbReference>
<dbReference type="PANTHER" id="PTHR43546">
    <property type="entry name" value="UPF0173 METAL-DEPENDENT HYDROLASE MJ1163-RELATED"/>
    <property type="match status" value="1"/>
</dbReference>
<dbReference type="PANTHER" id="PTHR43546:SF4">
    <property type="entry name" value="UPF0282 PROTEIN MJ1629"/>
    <property type="match status" value="1"/>
</dbReference>
<dbReference type="PIRSF" id="PIRSF004944">
    <property type="entry name" value="UCP004944_hydrls"/>
    <property type="match status" value="1"/>
</dbReference>
<dbReference type="SUPFAM" id="SSF56281">
    <property type="entry name" value="Metallo-hydrolase/oxidoreductase"/>
    <property type="match status" value="1"/>
</dbReference>
<name>Y2966_METMA</name>
<protein>
    <recommendedName>
        <fullName evidence="1">UPF0282 protein MM_2966</fullName>
    </recommendedName>
</protein>
<reference key="1">
    <citation type="journal article" date="2002" name="J. Mol. Microbiol. Biotechnol.">
        <title>The genome of Methanosarcina mazei: evidence for lateral gene transfer between Bacteria and Archaea.</title>
        <authorList>
            <person name="Deppenmeier U."/>
            <person name="Johann A."/>
            <person name="Hartsch T."/>
            <person name="Merkl R."/>
            <person name="Schmitz R.A."/>
            <person name="Martinez-Arias R."/>
            <person name="Henne A."/>
            <person name="Wiezer A."/>
            <person name="Baeumer S."/>
            <person name="Jacobi C."/>
            <person name="Brueggemann H."/>
            <person name="Lienard T."/>
            <person name="Christmann A."/>
            <person name="Boemecke M."/>
            <person name="Steckel S."/>
            <person name="Bhattacharyya A."/>
            <person name="Lykidis A."/>
            <person name="Overbeek R."/>
            <person name="Klenk H.-P."/>
            <person name="Gunsalus R.P."/>
            <person name="Fritz H.-J."/>
            <person name="Gottschalk G."/>
        </authorList>
    </citation>
    <scope>NUCLEOTIDE SEQUENCE [LARGE SCALE GENOMIC DNA]</scope>
    <source>
        <strain>ATCC BAA-159 / DSM 3647 / Goe1 / Go1 / JCM 11833 / OCM 88</strain>
    </source>
</reference>
<proteinExistence type="inferred from homology"/>
<organism>
    <name type="scientific">Methanosarcina mazei (strain ATCC BAA-159 / DSM 3647 / Goe1 / Go1 / JCM 11833 / OCM 88)</name>
    <name type="common">Methanosarcina frisia</name>
    <dbReference type="NCBI Taxonomy" id="192952"/>
    <lineage>
        <taxon>Archaea</taxon>
        <taxon>Methanobacteriati</taxon>
        <taxon>Methanobacteriota</taxon>
        <taxon>Stenosarchaea group</taxon>
        <taxon>Methanomicrobia</taxon>
        <taxon>Methanosarcinales</taxon>
        <taxon>Methanosarcinaceae</taxon>
        <taxon>Methanosarcina</taxon>
    </lineage>
</organism>
<accession>Q8PSW0</accession>
<evidence type="ECO:0000255" key="1">
    <source>
        <dbReference type="HAMAP-Rule" id="MF_01406"/>
    </source>
</evidence>
<gene>
    <name type="ordered locus">MM_2966</name>
</gene>
<comment type="similarity">
    <text evidence="1">Belongs to the UPF0282 family.</text>
</comment>
<sequence>MQIKILGCESFGARSLACIVKTGERKILIDPGVALARLRYGLLPHPVEVAAALRVREKILAELEGTTDIVISHYHGDHMPMKAEDPYQLPVEALPDLKGVRFWCKGPGNISGLSARRRKEFFRYLGHSLPASEGISSEGVSFSPAVPHGTRDKGFGTVMMTRVSEEDEVFVHGSDIQLLDREAVMQILAWKPSVVFVSGPPLYLSHHVPEASNEALENALLLAENAGTLILDHHLLRFLEGYRWLKDLAGMVKNTVVCAAEFMGKKPELLDAQRKSLYEEMPVPRGWHEAYEKGEAGVEDYLL</sequence>